<keyword id="KW-0067">ATP-binding</keyword>
<keyword id="KW-0436">Ligase</keyword>
<keyword id="KW-0547">Nucleotide-binding</keyword>
<keyword id="KW-1185">Reference proteome</keyword>
<sequence length="423" mass="45157">MALPARSDSGCAVPVEFTSAEQAAAHIGANSLQDGPIGRVGLEIEAHCFDLSNPTRRPSWDELSAVIADVPPLPGGSRITVEPGGAVELSGPPYDGPLAAVAALQADRAVLRAEFARRNLGLVLLGTDPLRPTRRVNPGARYSAMEQFFTASGTAEAGAAMMTATASVQVNLDAGPRDGWAERVRLAHALGPTMIAITANSPMLGGQFTGWCSTRQRVWGQLDSARCGPVLGVDGDDPASEWARYALRAPVMLVNSPDAVPVTNWVPFADWADGRAVLGGRRPTEADLDYHLTTLFPPVRPRRWLEIRYLDSVPDALWPAAVFTLTTLLDDPVAAESAAEATRPVATAWDRAARMGLTDRHLHTAALTCVRLAAERAPAELEESMTLLMRSVQQRRSPADDFSDRVVARGIAAAVRELAKGEL</sequence>
<comment type="function">
    <text evidence="1 2">Catalyzes the synthesis of gamma-glutamylcysteine (gamma-GC) (By similarity). This compound is used as substrate for the biosynthesis of the low-molecular thiol compound ergothioneine (PubMed:20420449).</text>
</comment>
<comment type="catalytic activity">
    <reaction evidence="1">
        <text>L-cysteine + L-glutamate + ATP = gamma-L-glutamyl-L-cysteine + ADP + phosphate + H(+)</text>
        <dbReference type="Rhea" id="RHEA:13285"/>
        <dbReference type="ChEBI" id="CHEBI:15378"/>
        <dbReference type="ChEBI" id="CHEBI:29985"/>
        <dbReference type="ChEBI" id="CHEBI:30616"/>
        <dbReference type="ChEBI" id="CHEBI:35235"/>
        <dbReference type="ChEBI" id="CHEBI:43474"/>
        <dbReference type="ChEBI" id="CHEBI:58173"/>
        <dbReference type="ChEBI" id="CHEBI:456216"/>
        <dbReference type="EC" id="6.3.2.2"/>
    </reaction>
</comment>
<comment type="pathway">
    <text evidence="5">Amino-acid biosynthesis; ergothioneine biosynthesis.</text>
</comment>
<comment type="similarity">
    <text evidence="4">Belongs to the glutamate--cysteine ligase type 2 family. EgtA subfamily.</text>
</comment>
<comment type="sequence caution" evidence="4">
    <conflict type="erroneous initiation">
        <sequence resource="EMBL-CDS" id="AFP42520"/>
    </conflict>
    <text>Extended N-terminus.</text>
</comment>
<gene>
    <name evidence="3" type="primary">egtA</name>
    <name type="ordered locus">MSMEG_6250</name>
    <name type="ordered locus">MSMEI_6089</name>
</gene>
<name>EGTA_MYCS2</name>
<protein>
    <recommendedName>
        <fullName>Glutamate--cysteine ligase EgtA</fullName>
        <ecNumber evidence="1">6.3.2.2</ecNumber>
    </recommendedName>
    <alternativeName>
        <fullName>Gamma-glutamylcysteine synthetase</fullName>
        <shortName>GCS</shortName>
        <shortName>Gamma-ECS</shortName>
    </alternativeName>
</protein>
<reference key="1">
    <citation type="submission" date="2006-10" db="EMBL/GenBank/DDBJ databases">
        <authorList>
            <person name="Fleischmann R.D."/>
            <person name="Dodson R.J."/>
            <person name="Haft D.H."/>
            <person name="Merkel J.S."/>
            <person name="Nelson W.C."/>
            <person name="Fraser C.M."/>
        </authorList>
    </citation>
    <scope>NUCLEOTIDE SEQUENCE [LARGE SCALE GENOMIC DNA]</scope>
    <source>
        <strain>ATCC 700084 / mc(2)155</strain>
    </source>
</reference>
<reference key="2">
    <citation type="journal article" date="2007" name="Genome Biol.">
        <title>Interrupted coding sequences in Mycobacterium smegmatis: authentic mutations or sequencing errors?</title>
        <authorList>
            <person name="Deshayes C."/>
            <person name="Perrodou E."/>
            <person name="Gallien S."/>
            <person name="Euphrasie D."/>
            <person name="Schaeffer C."/>
            <person name="Van-Dorsselaer A."/>
            <person name="Poch O."/>
            <person name="Lecompte O."/>
            <person name="Reyrat J.-M."/>
        </authorList>
    </citation>
    <scope>NUCLEOTIDE SEQUENCE [LARGE SCALE GENOMIC DNA]</scope>
    <source>
        <strain>ATCC 700084 / mc(2)155</strain>
    </source>
</reference>
<reference key="3">
    <citation type="journal article" date="2009" name="Genome Res.">
        <title>Ortho-proteogenomics: multiple proteomes investigation through orthology and a new MS-based protocol.</title>
        <authorList>
            <person name="Gallien S."/>
            <person name="Perrodou E."/>
            <person name="Carapito C."/>
            <person name="Deshayes C."/>
            <person name="Reyrat J.-M."/>
            <person name="Van Dorsselaer A."/>
            <person name="Poch O."/>
            <person name="Schaeffer C."/>
            <person name="Lecompte O."/>
        </authorList>
    </citation>
    <scope>NUCLEOTIDE SEQUENCE [LARGE SCALE GENOMIC DNA]</scope>
    <source>
        <strain>ATCC 700084 / mc(2)155</strain>
    </source>
</reference>
<reference key="4">
    <citation type="journal article" date="2010" name="J. Am. Chem. Soc.">
        <title>In vitro reconstitution of Mycobacterial ergothioneine biosynthesis.</title>
        <authorList>
            <person name="Seebeck F.P."/>
        </authorList>
    </citation>
    <scope>FUNCTION</scope>
    <scope>GENE NAME</scope>
    <scope>PATHWAY</scope>
    <source>
        <strain>ATCC 607 / DSM 43465 / JCM 20379 / NBRC 3207 / NRRL B-692</strain>
    </source>
</reference>
<evidence type="ECO:0000250" key="1">
    <source>
        <dbReference type="UniProtKB" id="P9WPK7"/>
    </source>
</evidence>
<evidence type="ECO:0000269" key="2">
    <source>
    </source>
</evidence>
<evidence type="ECO:0000303" key="3">
    <source>
    </source>
</evidence>
<evidence type="ECO:0000305" key="4"/>
<evidence type="ECO:0000305" key="5">
    <source>
    </source>
</evidence>
<feature type="chain" id="PRO_0000413645" description="Glutamate--cysteine ligase EgtA">
    <location>
        <begin position="1"/>
        <end position="423"/>
    </location>
</feature>
<proteinExistence type="inferred from homology"/>
<dbReference type="EC" id="6.3.2.2" evidence="1"/>
<dbReference type="EMBL" id="CP000480">
    <property type="protein sequence ID" value="ABK74415.1"/>
    <property type="molecule type" value="Genomic_DNA"/>
</dbReference>
<dbReference type="EMBL" id="CP001663">
    <property type="protein sequence ID" value="AFP42520.1"/>
    <property type="status" value="ALT_INIT"/>
    <property type="molecule type" value="Genomic_DNA"/>
</dbReference>
<dbReference type="RefSeq" id="WP_011731159.1">
    <property type="nucleotide sequence ID" value="NZ_SIJM01000027.1"/>
</dbReference>
<dbReference type="RefSeq" id="YP_890469.1">
    <property type="nucleotide sequence ID" value="NC_008596.1"/>
</dbReference>
<dbReference type="SMR" id="A0R5N1"/>
<dbReference type="STRING" id="246196.MSMEG_6250"/>
<dbReference type="PaxDb" id="246196-MSMEI_6089"/>
<dbReference type="GeneID" id="93460868"/>
<dbReference type="KEGG" id="msb:LJ00_30905"/>
<dbReference type="KEGG" id="msg:MSMEI_6089"/>
<dbReference type="KEGG" id="msm:MSMEG_6250"/>
<dbReference type="PATRIC" id="fig|246196.19.peg.6089"/>
<dbReference type="eggNOG" id="COG3572">
    <property type="taxonomic scope" value="Bacteria"/>
</dbReference>
<dbReference type="OrthoDB" id="9780152at2"/>
<dbReference type="BioCyc" id="MetaCyc:MONOMER-17988"/>
<dbReference type="UniPathway" id="UPA01014"/>
<dbReference type="Proteomes" id="UP000000757">
    <property type="component" value="Chromosome"/>
</dbReference>
<dbReference type="Proteomes" id="UP000006158">
    <property type="component" value="Chromosome"/>
</dbReference>
<dbReference type="GO" id="GO:0005524">
    <property type="term" value="F:ATP binding"/>
    <property type="evidence" value="ECO:0007669"/>
    <property type="project" value="UniProtKB-UniRule"/>
</dbReference>
<dbReference type="GO" id="GO:0004357">
    <property type="term" value="F:glutamate-cysteine ligase activity"/>
    <property type="evidence" value="ECO:0000250"/>
    <property type="project" value="UniProtKB"/>
</dbReference>
<dbReference type="GO" id="GO:0052699">
    <property type="term" value="P:ergothioneine biosynthetic process"/>
    <property type="evidence" value="ECO:0007669"/>
    <property type="project" value="UniProtKB-UniRule"/>
</dbReference>
<dbReference type="GO" id="GO:0006750">
    <property type="term" value="P:glutathione biosynthetic process"/>
    <property type="evidence" value="ECO:0007669"/>
    <property type="project" value="InterPro"/>
</dbReference>
<dbReference type="FunFam" id="3.30.590.20:FF:000006">
    <property type="entry name" value="Glutamate--cysteine ligase EgtA"/>
    <property type="match status" value="1"/>
</dbReference>
<dbReference type="Gene3D" id="3.30.590.20">
    <property type="match status" value="1"/>
</dbReference>
<dbReference type="HAMAP" id="MF_02034">
    <property type="entry name" value="EgtA"/>
    <property type="match status" value="1"/>
</dbReference>
<dbReference type="InterPro" id="IPR017809">
    <property type="entry name" value="EgtA_Actinobacteria"/>
</dbReference>
<dbReference type="InterPro" id="IPR035434">
    <property type="entry name" value="GCL_bact_plant"/>
</dbReference>
<dbReference type="InterPro" id="IPR006336">
    <property type="entry name" value="GCS2"/>
</dbReference>
<dbReference type="InterPro" id="IPR014746">
    <property type="entry name" value="Gln_synth/guanido_kin_cat_dom"/>
</dbReference>
<dbReference type="NCBIfam" id="TIGR03444">
    <property type="entry name" value="EgtA_Cys_ligase"/>
    <property type="match status" value="1"/>
</dbReference>
<dbReference type="PANTHER" id="PTHR34378">
    <property type="entry name" value="GLUTAMATE--CYSTEINE LIGASE, CHLOROPLASTIC"/>
    <property type="match status" value="1"/>
</dbReference>
<dbReference type="PANTHER" id="PTHR34378:SF1">
    <property type="entry name" value="GLUTAMATE--CYSTEINE LIGASE, CHLOROPLASTIC"/>
    <property type="match status" value="1"/>
</dbReference>
<dbReference type="Pfam" id="PF04107">
    <property type="entry name" value="GCS2"/>
    <property type="match status" value="1"/>
</dbReference>
<dbReference type="PIRSF" id="PIRSF017901">
    <property type="entry name" value="GCL"/>
    <property type="match status" value="1"/>
</dbReference>
<dbReference type="SUPFAM" id="SSF55931">
    <property type="entry name" value="Glutamine synthetase/guanido kinase"/>
    <property type="match status" value="1"/>
</dbReference>
<accession>A0R5N1</accession>
<accession>I7FMI3</accession>
<organism>
    <name type="scientific">Mycolicibacterium smegmatis (strain ATCC 700084 / mc(2)155)</name>
    <name type="common">Mycobacterium smegmatis</name>
    <dbReference type="NCBI Taxonomy" id="246196"/>
    <lineage>
        <taxon>Bacteria</taxon>
        <taxon>Bacillati</taxon>
        <taxon>Actinomycetota</taxon>
        <taxon>Actinomycetes</taxon>
        <taxon>Mycobacteriales</taxon>
        <taxon>Mycobacteriaceae</taxon>
        <taxon>Mycolicibacterium</taxon>
    </lineage>
</organism>